<accession>Q8Y8D7</accession>
<sequence>MKYMITSKGDEKSDLLRLNMIAGFGEYDMEYDDVEPEIVISIGGDGTFLSAFHQYEERLDEIAFIGIHTGHLGFYADWRPAEADKLVKLLAKGEYQKVSYPLLKTTVKYGIGKKEATYLALNESTVKSSGGPFVVDVVINDIHFERFRGDGLCMSTPSGTTAYNKSLGGALMHPSIEAMQLTEMASINNRVYRTIGSPLVFPKHHVVSLQPVNDKDFQISVDHLSILHRDVQEIRYEVSAKKIHFARFRSFPFWRRVHDSFIED</sequence>
<keyword id="KW-0002">3D-structure</keyword>
<keyword id="KW-0067">ATP-binding</keyword>
<keyword id="KW-0963">Cytoplasm</keyword>
<keyword id="KW-0418">Kinase</keyword>
<keyword id="KW-0520">NAD</keyword>
<keyword id="KW-0521">NADP</keyword>
<keyword id="KW-0547">Nucleotide-binding</keyword>
<keyword id="KW-1185">Reference proteome</keyword>
<keyword id="KW-0808">Transferase</keyword>
<evidence type="ECO:0000255" key="1">
    <source>
        <dbReference type="HAMAP-Rule" id="MF_00361"/>
    </source>
</evidence>
<evidence type="ECO:0000269" key="2">
    <source>
    </source>
</evidence>
<evidence type="ECO:0000269" key="3">
    <source>
    </source>
</evidence>
<evidence type="ECO:0000305" key="4">
    <source>
    </source>
</evidence>
<evidence type="ECO:0007829" key="5">
    <source>
        <dbReference type="PDB" id="6RGE"/>
    </source>
</evidence>
<evidence type="ECO:0007829" key="6">
    <source>
        <dbReference type="PDB" id="7ZZB"/>
    </source>
</evidence>
<evidence type="ECO:0007829" key="7">
    <source>
        <dbReference type="PDB" id="8B47"/>
    </source>
</evidence>
<organism>
    <name type="scientific">Listeria monocytogenes serovar 1/2a (strain ATCC BAA-679 / EGD-e)</name>
    <dbReference type="NCBI Taxonomy" id="169963"/>
    <lineage>
        <taxon>Bacteria</taxon>
        <taxon>Bacillati</taxon>
        <taxon>Bacillota</taxon>
        <taxon>Bacilli</taxon>
        <taxon>Bacillales</taxon>
        <taxon>Listeriaceae</taxon>
        <taxon>Listeria</taxon>
    </lineage>
</organism>
<gene>
    <name evidence="1" type="primary">nadK1</name>
    <name type="ordered locus">lmo0968</name>
</gene>
<reference key="1">
    <citation type="journal article" date="2001" name="Science">
        <title>Comparative genomics of Listeria species.</title>
        <authorList>
            <person name="Glaser P."/>
            <person name="Frangeul L."/>
            <person name="Buchrieser C."/>
            <person name="Rusniok C."/>
            <person name="Amend A."/>
            <person name="Baquero F."/>
            <person name="Berche P."/>
            <person name="Bloecker H."/>
            <person name="Brandt P."/>
            <person name="Chakraborty T."/>
            <person name="Charbit A."/>
            <person name="Chetouani F."/>
            <person name="Couve E."/>
            <person name="de Daruvar A."/>
            <person name="Dehoux P."/>
            <person name="Domann E."/>
            <person name="Dominguez-Bernal G."/>
            <person name="Duchaud E."/>
            <person name="Durant L."/>
            <person name="Dussurget O."/>
            <person name="Entian K.-D."/>
            <person name="Fsihi H."/>
            <person name="Garcia-del Portillo F."/>
            <person name="Garrido P."/>
            <person name="Gautier L."/>
            <person name="Goebel W."/>
            <person name="Gomez-Lopez N."/>
            <person name="Hain T."/>
            <person name="Hauf J."/>
            <person name="Jackson D."/>
            <person name="Jones L.-M."/>
            <person name="Kaerst U."/>
            <person name="Kreft J."/>
            <person name="Kuhn M."/>
            <person name="Kunst F."/>
            <person name="Kurapkat G."/>
            <person name="Madueno E."/>
            <person name="Maitournam A."/>
            <person name="Mata Vicente J."/>
            <person name="Ng E."/>
            <person name="Nedjari H."/>
            <person name="Nordsiek G."/>
            <person name="Novella S."/>
            <person name="de Pablos B."/>
            <person name="Perez-Diaz J.-C."/>
            <person name="Purcell R."/>
            <person name="Remmel B."/>
            <person name="Rose M."/>
            <person name="Schlueter T."/>
            <person name="Simoes N."/>
            <person name="Tierrez A."/>
            <person name="Vazquez-Boland J.-A."/>
            <person name="Voss H."/>
            <person name="Wehland J."/>
            <person name="Cossart P."/>
        </authorList>
    </citation>
    <scope>NUCLEOTIDE SEQUENCE [LARGE SCALE GENOMIC DNA]</scope>
    <source>
        <strain>ATCC BAA-679 / EGD-e</strain>
    </source>
</reference>
<reference key="2">
    <citation type="journal article" date="2007" name="J. Biol. Chem.">
        <title>NAD kinases use substrate-assisted catalysis for specific recognition of NAD.</title>
        <authorList>
            <person name="Poncet-Montange G."/>
            <person name="Assairi L."/>
            <person name="Arold S."/>
            <person name="Pochet S."/>
            <person name="Labesse G."/>
        </authorList>
    </citation>
    <scope>X-RAY CRYSTALLOGRAPHY (1.85 ANGSTROMS) OF WILD-TYPE AND MUTANT ASN-45 IN COMPLEX WITH NAD AND NAD ANALOGS</scope>
    <scope>FUNCTION</scope>
    <scope>CATALYTIC ACTIVITY</scope>
    <scope>MUTAGENESIS OF ASP-45 AND HIS-223</scope>
    <scope>ACTIVE SITE</scope>
    <scope>ACTIVITY REGULATION</scope>
    <scope>BIOPHYSICOCHEMICAL PROPERTIES</scope>
    <scope>SUBUNIT</scope>
</reference>
<reference key="3">
    <citation type="journal article" date="2012" name="Structure">
        <title>Screening and in situ synthesis using crystals of a NAD kinase lead to a potent antistaphylococcal compound.</title>
        <authorList>
            <person name="Gelin M."/>
            <person name="Poncet-Montange G."/>
            <person name="Assairi L."/>
            <person name="Morellato L."/>
            <person name="Huteau V."/>
            <person name="Dugue L."/>
            <person name="Dussurget O."/>
            <person name="Pochet S."/>
            <person name="Labesse G."/>
        </authorList>
    </citation>
    <scope>X-RAY CRYSTALLOGRAPHY (1.97 ANGSTROMS) OF WILD-TYPE AND MUTANT GLU-223 IN COMPLEX WITH NAD ANALOGS</scope>
    <scope>FUNCTION</scope>
    <scope>MUTAGENESIS OF HIS-223</scope>
    <scope>ACTIVITY REGULATION</scope>
</reference>
<proteinExistence type="evidence at protein level"/>
<name>NADK1_LISMO</name>
<comment type="function">
    <text evidence="1 2 3">Involved in the regulation of the intracellular balance of NAD and NADP, and is a key enzyme in the biosynthesis of NADP. Catalyzes specifically the phosphorylation on 2'-hydroxyl of the adenosine moiety of NAD to yield NADP.</text>
</comment>
<comment type="catalytic activity">
    <reaction evidence="1 2">
        <text>NAD(+) + ATP = ADP + NADP(+) + H(+)</text>
        <dbReference type="Rhea" id="RHEA:18629"/>
        <dbReference type="ChEBI" id="CHEBI:15378"/>
        <dbReference type="ChEBI" id="CHEBI:30616"/>
        <dbReference type="ChEBI" id="CHEBI:57540"/>
        <dbReference type="ChEBI" id="CHEBI:58349"/>
        <dbReference type="ChEBI" id="CHEBI:456216"/>
        <dbReference type="EC" id="2.7.1.23"/>
    </reaction>
</comment>
<comment type="cofactor">
    <cofactor evidence="1">
        <name>a divalent metal cation</name>
        <dbReference type="ChEBI" id="CHEBI:60240"/>
    </cofactor>
</comment>
<comment type="activity regulation">
    <text evidence="2 3">Competitively inhibited by 5'-thioacetyladenosine (TAA) and di-(5'-thioadenosine) (DTA).</text>
</comment>
<comment type="biophysicochemical properties">
    <kinetics>
        <KM evidence="2">2.8 mM for ATP (at pH 7.5 and 30 degrees Celsius)</KM>
        <Vmax evidence="2">6.67 umol/min/mg enzyme (at pH 7.5 and 30 degrees Celsius)</Vmax>
        <text>kcat is 13.78 sec(-1) for kinase activity with ATP (at pH 7.5 and 30 degrees Celsius). kcat is 13.12 sec(-1) for kinase activity with NAD (at pH 7.5 and 30 degrees Celsius).</text>
    </kinetics>
</comment>
<comment type="subunit">
    <text evidence="2 3">Homotetramer.</text>
</comment>
<comment type="subcellular location">
    <subcellularLocation>
        <location evidence="1">Cytoplasm</location>
    </subcellularLocation>
</comment>
<comment type="similarity">
    <text evidence="1">Belongs to the NAD kinase family.</text>
</comment>
<protein>
    <recommendedName>
        <fullName evidence="1">NAD kinase 1</fullName>
        <ecNumber evidence="1">2.7.1.23</ecNumber>
    </recommendedName>
    <alternativeName>
        <fullName evidence="1">ATP-dependent NAD kinase</fullName>
    </alternativeName>
</protein>
<feature type="chain" id="PRO_0000120632" description="NAD kinase 1">
    <location>
        <begin position="1"/>
        <end position="264"/>
    </location>
</feature>
<feature type="active site" description="Proton acceptor" evidence="1 2">
    <location>
        <position position="45"/>
    </location>
</feature>
<feature type="binding site" evidence="1 2">
    <location>
        <begin position="45"/>
        <end position="46"/>
    </location>
    <ligand>
        <name>NAD(+)</name>
        <dbReference type="ChEBI" id="CHEBI:57540"/>
    </ligand>
</feature>
<feature type="binding site" evidence="1 2">
    <location>
        <position position="46"/>
    </location>
    <ligand>
        <name>NAD(+)</name>
        <dbReference type="ChEBI" id="CHEBI:57540"/>
    </ligand>
</feature>
<feature type="binding site" evidence="1 2">
    <location>
        <begin position="122"/>
        <end position="123"/>
    </location>
    <ligand>
        <name>NAD(+)</name>
        <dbReference type="ChEBI" id="CHEBI:57540"/>
    </ligand>
</feature>
<feature type="binding site" evidence="1">
    <location>
        <position position="148"/>
    </location>
    <ligand>
        <name>NAD(+)</name>
        <dbReference type="ChEBI" id="CHEBI:57540"/>
    </ligand>
</feature>
<feature type="binding site" evidence="4">
    <location>
        <position position="150"/>
    </location>
    <ligand>
        <name>NAD(+)</name>
        <dbReference type="ChEBI" id="CHEBI:57540"/>
    </ligand>
</feature>
<feature type="binding site" evidence="1 2">
    <location>
        <position position="158"/>
    </location>
    <ligand>
        <name>NAD(+)</name>
        <dbReference type="ChEBI" id="CHEBI:57540"/>
    </ligand>
</feature>
<feature type="binding site" evidence="1 2">
    <location>
        <begin position="161"/>
        <end position="166"/>
    </location>
    <ligand>
        <name>NAD(+)</name>
        <dbReference type="ChEBI" id="CHEBI:57540"/>
    </ligand>
</feature>
<feature type="binding site" evidence="1 2">
    <location>
        <position position="223"/>
    </location>
    <ligand>
        <name>NAD(+)</name>
        <dbReference type="ChEBI" id="CHEBI:57540"/>
    </ligand>
</feature>
<feature type="mutagenesis site" description="Only minor changes in the structure and a 10-fold decrease in the kinase activity." evidence="2">
    <original>D</original>
    <variation>N</variation>
    <location>
        <position position="45"/>
    </location>
</feature>
<feature type="mutagenesis site" description="Twice less active than the wild-type. Its activity toward DTA is increased 2-fold." evidence="2 3">
    <original>H</original>
    <variation>E</variation>
    <location>
        <position position="223"/>
    </location>
</feature>
<feature type="strand" evidence="6">
    <location>
        <begin position="2"/>
        <end position="7"/>
    </location>
</feature>
<feature type="helix" evidence="6">
    <location>
        <begin position="11"/>
        <end position="24"/>
    </location>
</feature>
<feature type="turn" evidence="6">
    <location>
        <begin position="25"/>
        <end position="28"/>
    </location>
</feature>
<feature type="strand" evidence="6">
    <location>
        <begin position="33"/>
        <end position="35"/>
    </location>
</feature>
<feature type="strand" evidence="6">
    <location>
        <begin position="37"/>
        <end position="43"/>
    </location>
</feature>
<feature type="helix" evidence="6">
    <location>
        <begin position="45"/>
        <end position="54"/>
    </location>
</feature>
<feature type="turn" evidence="6">
    <location>
        <begin position="55"/>
        <end position="57"/>
    </location>
</feature>
<feature type="helix" evidence="6">
    <location>
        <begin position="59"/>
        <end position="61"/>
    </location>
</feature>
<feature type="strand" evidence="6">
    <location>
        <begin position="63"/>
        <end position="71"/>
    </location>
</feature>
<feature type="strand" evidence="5">
    <location>
        <begin position="74"/>
        <end position="76"/>
    </location>
</feature>
<feature type="helix" evidence="6">
    <location>
        <begin position="80"/>
        <end position="82"/>
    </location>
</feature>
<feature type="helix" evidence="6">
    <location>
        <begin position="83"/>
        <end position="91"/>
    </location>
</feature>
<feature type="strand" evidence="6">
    <location>
        <begin position="96"/>
        <end position="110"/>
    </location>
</feature>
<feature type="turn" evidence="7">
    <location>
        <begin position="111"/>
        <end position="113"/>
    </location>
</feature>
<feature type="strand" evidence="6">
    <location>
        <begin position="115"/>
        <end position="131"/>
    </location>
</feature>
<feature type="strand" evidence="6">
    <location>
        <begin position="133"/>
        <end position="139"/>
    </location>
</feature>
<feature type="strand" evidence="6">
    <location>
        <begin position="142"/>
        <end position="155"/>
    </location>
</feature>
<feature type="helix" evidence="6">
    <location>
        <begin position="158"/>
        <end position="161"/>
    </location>
</feature>
<feature type="helix" evidence="6">
    <location>
        <begin position="163"/>
        <end position="166"/>
    </location>
</feature>
<feature type="strand" evidence="6">
    <location>
        <begin position="178"/>
        <end position="186"/>
    </location>
</feature>
<feature type="strand" evidence="6">
    <location>
        <begin position="189"/>
        <end position="191"/>
    </location>
</feature>
<feature type="strand" evidence="6">
    <location>
        <begin position="199"/>
        <end position="202"/>
    </location>
</feature>
<feature type="strand" evidence="6">
    <location>
        <begin position="207"/>
        <end position="213"/>
    </location>
</feature>
<feature type="strand" evidence="6">
    <location>
        <begin position="217"/>
        <end position="221"/>
    </location>
</feature>
<feature type="strand" evidence="6">
    <location>
        <begin position="224"/>
        <end position="228"/>
    </location>
</feature>
<feature type="strand" evidence="6">
    <location>
        <begin position="230"/>
        <end position="249"/>
    </location>
</feature>
<feature type="helix" evidence="6">
    <location>
        <begin position="253"/>
        <end position="261"/>
    </location>
</feature>
<dbReference type="EC" id="2.7.1.23" evidence="1"/>
<dbReference type="EMBL" id="AL591977">
    <property type="protein sequence ID" value="CAC99046.1"/>
    <property type="molecule type" value="Genomic_DNA"/>
</dbReference>
<dbReference type="PIR" id="AH1195">
    <property type="entry name" value="AH1195"/>
</dbReference>
<dbReference type="RefSeq" id="WP_003729850.1">
    <property type="nucleotide sequence ID" value="NZ_CP149495.1"/>
</dbReference>
<dbReference type="PDB" id="2I1W">
    <property type="method" value="X-ray"/>
    <property type="resolution" value="2.34 A"/>
    <property type="chains" value="A/B/C/D=1-264"/>
</dbReference>
<dbReference type="PDB" id="2I29">
    <property type="method" value="X-ray"/>
    <property type="resolution" value="2.10 A"/>
    <property type="chains" value="A=1-264"/>
</dbReference>
<dbReference type="PDB" id="2I2A">
    <property type="method" value="X-ray"/>
    <property type="resolution" value="2.10 A"/>
    <property type="chains" value="A=1-264"/>
</dbReference>
<dbReference type="PDB" id="2I2B">
    <property type="method" value="X-ray"/>
    <property type="resolution" value="2.10 A"/>
    <property type="chains" value="A=1-264"/>
</dbReference>
<dbReference type="PDB" id="2I2C">
    <property type="method" value="X-ray"/>
    <property type="resolution" value="1.85 A"/>
    <property type="chains" value="A=1-264"/>
</dbReference>
<dbReference type="PDB" id="2I2D">
    <property type="method" value="X-ray"/>
    <property type="resolution" value="2.22 A"/>
    <property type="chains" value="A=1-264"/>
</dbReference>
<dbReference type="PDB" id="2I2F">
    <property type="method" value="X-ray"/>
    <property type="resolution" value="1.90 A"/>
    <property type="chains" value="A=1-264"/>
</dbReference>
<dbReference type="PDB" id="2Q5F">
    <property type="method" value="X-ray"/>
    <property type="resolution" value="1.90 A"/>
    <property type="chains" value="A=1-264"/>
</dbReference>
<dbReference type="PDB" id="3V7U">
    <property type="method" value="X-ray"/>
    <property type="resolution" value="1.97 A"/>
    <property type="chains" value="A=1-264"/>
</dbReference>
<dbReference type="PDB" id="3V7W">
    <property type="method" value="X-ray"/>
    <property type="resolution" value="2.01 A"/>
    <property type="chains" value="A=1-264"/>
</dbReference>
<dbReference type="PDB" id="3V7Y">
    <property type="method" value="X-ray"/>
    <property type="resolution" value="1.97 A"/>
    <property type="chains" value="A=1-264"/>
</dbReference>
<dbReference type="PDB" id="3V80">
    <property type="method" value="X-ray"/>
    <property type="resolution" value="2.03 A"/>
    <property type="chains" value="A=1-264"/>
</dbReference>
<dbReference type="PDB" id="3V8M">
    <property type="method" value="X-ray"/>
    <property type="resolution" value="2.48 A"/>
    <property type="chains" value="A=1-264"/>
</dbReference>
<dbReference type="PDB" id="3V8N">
    <property type="method" value="X-ray"/>
    <property type="resolution" value="2.38 A"/>
    <property type="chains" value="A=1-264"/>
</dbReference>
<dbReference type="PDB" id="3V8P">
    <property type="method" value="X-ray"/>
    <property type="resolution" value="2.29 A"/>
    <property type="chains" value="A=1-264"/>
</dbReference>
<dbReference type="PDB" id="3V8Q">
    <property type="method" value="X-ray"/>
    <property type="resolution" value="2.37 A"/>
    <property type="chains" value="A=1-264"/>
</dbReference>
<dbReference type="PDB" id="3V8R">
    <property type="method" value="X-ray"/>
    <property type="resolution" value="2.39 A"/>
    <property type="chains" value="A=1-264"/>
</dbReference>
<dbReference type="PDB" id="4DY6">
    <property type="method" value="X-ray"/>
    <property type="resolution" value="2.20 A"/>
    <property type="chains" value="A=1-264"/>
</dbReference>
<dbReference type="PDB" id="5DHP">
    <property type="method" value="X-ray"/>
    <property type="resolution" value="2.27 A"/>
    <property type="chains" value="A/B/C/D=1-264"/>
</dbReference>
<dbReference type="PDB" id="5DHQ">
    <property type="method" value="X-ray"/>
    <property type="resolution" value="2.29 A"/>
    <property type="chains" value="A/B/C/D=1-264"/>
</dbReference>
<dbReference type="PDB" id="5DHR">
    <property type="method" value="X-ray"/>
    <property type="resolution" value="2.31 A"/>
    <property type="chains" value="A/B/C/D=1-264"/>
</dbReference>
<dbReference type="PDB" id="5DHS">
    <property type="method" value="X-ray"/>
    <property type="resolution" value="2.62 A"/>
    <property type="chains" value="A/B/C/D=1-264"/>
</dbReference>
<dbReference type="PDB" id="5DHT">
    <property type="method" value="X-ray"/>
    <property type="resolution" value="2.59 A"/>
    <property type="chains" value="A/B/C/D=1-264"/>
</dbReference>
<dbReference type="PDB" id="5DHU">
    <property type="method" value="X-ray"/>
    <property type="resolution" value="2.33 A"/>
    <property type="chains" value="A/B/C/D=1-264"/>
</dbReference>
<dbReference type="PDB" id="5EJF">
    <property type="method" value="X-ray"/>
    <property type="resolution" value="2.12 A"/>
    <property type="chains" value="A/B/C/D=1-264"/>
</dbReference>
<dbReference type="PDB" id="5EJG">
    <property type="method" value="X-ray"/>
    <property type="resolution" value="2.88 A"/>
    <property type="chains" value="A/B/C/D=1-264"/>
</dbReference>
<dbReference type="PDB" id="5EJH">
    <property type="method" value="X-ray"/>
    <property type="resolution" value="2.00 A"/>
    <property type="chains" value="A=1-264"/>
</dbReference>
<dbReference type="PDB" id="5EJI">
    <property type="method" value="X-ray"/>
    <property type="resolution" value="2.29 A"/>
    <property type="chains" value="A=1-264"/>
</dbReference>
<dbReference type="PDB" id="6RBO">
    <property type="method" value="X-ray"/>
    <property type="resolution" value="1.94 A"/>
    <property type="chains" value="A=1-264"/>
</dbReference>
<dbReference type="PDB" id="6RBP">
    <property type="method" value="X-ray"/>
    <property type="resolution" value="2.47 A"/>
    <property type="chains" value="A=1-264"/>
</dbReference>
<dbReference type="PDB" id="6RBQ">
    <property type="method" value="X-ray"/>
    <property type="resolution" value="2.24 A"/>
    <property type="chains" value="A=1-264"/>
</dbReference>
<dbReference type="PDB" id="6RBR">
    <property type="method" value="X-ray"/>
    <property type="resolution" value="2.06 A"/>
    <property type="chains" value="A=1-264"/>
</dbReference>
<dbReference type="PDB" id="6RBS">
    <property type="method" value="X-ray"/>
    <property type="resolution" value="2.32 A"/>
    <property type="chains" value="A=1-264"/>
</dbReference>
<dbReference type="PDB" id="6RBT">
    <property type="method" value="X-ray"/>
    <property type="resolution" value="2.55 A"/>
    <property type="chains" value="A=1-264"/>
</dbReference>
<dbReference type="PDB" id="6RBU">
    <property type="method" value="X-ray"/>
    <property type="resolution" value="1.97 A"/>
    <property type="chains" value="A=1-264"/>
</dbReference>
<dbReference type="PDB" id="6RBV">
    <property type="method" value="X-ray"/>
    <property type="resolution" value="2.29 A"/>
    <property type="chains" value="A=1-264"/>
</dbReference>
<dbReference type="PDB" id="6RBW">
    <property type="method" value="X-ray"/>
    <property type="resolution" value="2.50 A"/>
    <property type="chains" value="A=1-264"/>
</dbReference>
<dbReference type="PDB" id="6RBX">
    <property type="method" value="X-ray"/>
    <property type="resolution" value="2.47 A"/>
    <property type="chains" value="A=1-264"/>
</dbReference>
<dbReference type="PDB" id="6RBY">
    <property type="method" value="X-ray"/>
    <property type="resolution" value="2.31 A"/>
    <property type="chains" value="A=1-264"/>
</dbReference>
<dbReference type="PDB" id="6RBZ">
    <property type="method" value="X-ray"/>
    <property type="resolution" value="2.32 A"/>
    <property type="chains" value="A=1-264"/>
</dbReference>
<dbReference type="PDB" id="6RC0">
    <property type="method" value="X-ray"/>
    <property type="resolution" value="2.75 A"/>
    <property type="chains" value="A=1-264"/>
</dbReference>
<dbReference type="PDB" id="6RC1">
    <property type="method" value="X-ray"/>
    <property type="resolution" value="2.54 A"/>
    <property type="chains" value="A=1-264"/>
</dbReference>
<dbReference type="PDB" id="6RC2">
    <property type="method" value="X-ray"/>
    <property type="resolution" value="2.05 A"/>
    <property type="chains" value="A=1-264"/>
</dbReference>
<dbReference type="PDB" id="6RC3">
    <property type="method" value="X-ray"/>
    <property type="resolution" value="2.31 A"/>
    <property type="chains" value="A=1-264"/>
</dbReference>
<dbReference type="PDB" id="6RC4">
    <property type="method" value="X-ray"/>
    <property type="resolution" value="2.28 A"/>
    <property type="chains" value="A=1-264"/>
</dbReference>
<dbReference type="PDB" id="6RC5">
    <property type="method" value="X-ray"/>
    <property type="resolution" value="2.04 A"/>
    <property type="chains" value="A=1-264"/>
</dbReference>
<dbReference type="PDB" id="6RC6">
    <property type="method" value="X-ray"/>
    <property type="resolution" value="2.29 A"/>
    <property type="chains" value="A=1-264"/>
</dbReference>
<dbReference type="PDB" id="6RG6">
    <property type="method" value="X-ray"/>
    <property type="resolution" value="2.52 A"/>
    <property type="chains" value="A=1-264"/>
</dbReference>
<dbReference type="PDB" id="6RG7">
    <property type="method" value="X-ray"/>
    <property type="resolution" value="2.08 A"/>
    <property type="chains" value="A=1-264"/>
</dbReference>
<dbReference type="PDB" id="6RG8">
    <property type="method" value="X-ray"/>
    <property type="resolution" value="2.47 A"/>
    <property type="chains" value="A=1-264"/>
</dbReference>
<dbReference type="PDB" id="6RG9">
    <property type="method" value="X-ray"/>
    <property type="resolution" value="2.08 A"/>
    <property type="chains" value="A=1-264"/>
</dbReference>
<dbReference type="PDB" id="6RGA">
    <property type="method" value="X-ray"/>
    <property type="resolution" value="2.18 A"/>
    <property type="chains" value="A=1-264"/>
</dbReference>
<dbReference type="PDB" id="6RGB">
    <property type="method" value="X-ray"/>
    <property type="resolution" value="2.25 A"/>
    <property type="chains" value="A=1-264"/>
</dbReference>
<dbReference type="PDB" id="6RGC">
    <property type="method" value="X-ray"/>
    <property type="resolution" value="2.19 A"/>
    <property type="chains" value="A=1-264"/>
</dbReference>
<dbReference type="PDB" id="6RGD">
    <property type="method" value="X-ray"/>
    <property type="resolution" value="2.30 A"/>
    <property type="chains" value="A=1-264"/>
</dbReference>
<dbReference type="PDB" id="6RGE">
    <property type="method" value="X-ray"/>
    <property type="resolution" value="1.80 A"/>
    <property type="chains" value="A=1-264"/>
</dbReference>
<dbReference type="PDB" id="6RGF">
    <property type="method" value="X-ray"/>
    <property type="resolution" value="2.30 A"/>
    <property type="chains" value="A=1-264"/>
</dbReference>
<dbReference type="PDB" id="6RR2">
    <property type="method" value="X-ray"/>
    <property type="resolution" value="1.99 A"/>
    <property type="chains" value="A=1-264"/>
</dbReference>
<dbReference type="PDB" id="6Z61">
    <property type="method" value="X-ray"/>
    <property type="resolution" value="2.47 A"/>
    <property type="chains" value="A=1-264"/>
</dbReference>
<dbReference type="PDB" id="6Z64">
    <property type="method" value="X-ray"/>
    <property type="resolution" value="1.89 A"/>
    <property type="chains" value="A=1-264"/>
</dbReference>
<dbReference type="PDB" id="6Z65">
    <property type="method" value="X-ray"/>
    <property type="resolution" value="1.97 A"/>
    <property type="chains" value="A=1-264"/>
</dbReference>
<dbReference type="PDB" id="7ZZ7">
    <property type="method" value="X-ray"/>
    <property type="resolution" value="2.00 A"/>
    <property type="chains" value="A=1-264"/>
</dbReference>
<dbReference type="PDB" id="7ZZ9">
    <property type="method" value="X-ray"/>
    <property type="resolution" value="1.89 A"/>
    <property type="chains" value="A=1-264"/>
</dbReference>
<dbReference type="PDB" id="7ZZA">
    <property type="method" value="X-ray"/>
    <property type="resolution" value="2.05 A"/>
    <property type="chains" value="A=1-264"/>
</dbReference>
<dbReference type="PDB" id="7ZZB">
    <property type="method" value="X-ray"/>
    <property type="resolution" value="1.56 A"/>
    <property type="chains" value="A=1-264"/>
</dbReference>
<dbReference type="PDB" id="7ZZC">
    <property type="method" value="X-ray"/>
    <property type="resolution" value="2.10 A"/>
    <property type="chains" value="A=1-264"/>
</dbReference>
<dbReference type="PDB" id="7ZZD">
    <property type="method" value="X-ray"/>
    <property type="resolution" value="1.79 A"/>
    <property type="chains" value="A=1-264"/>
</dbReference>
<dbReference type="PDB" id="7ZZE">
    <property type="method" value="X-ray"/>
    <property type="resolution" value="1.78 A"/>
    <property type="chains" value="A=1-264"/>
</dbReference>
<dbReference type="PDB" id="7ZZF">
    <property type="method" value="X-ray"/>
    <property type="resolution" value="2.41 A"/>
    <property type="chains" value="A=1-264"/>
</dbReference>
<dbReference type="PDB" id="7ZZG">
    <property type="method" value="X-ray"/>
    <property type="resolution" value="2.30 A"/>
    <property type="chains" value="A=1-264"/>
</dbReference>
<dbReference type="PDB" id="7ZZH">
    <property type="method" value="X-ray"/>
    <property type="resolution" value="2.00 A"/>
    <property type="chains" value="A=1-264"/>
</dbReference>
<dbReference type="PDB" id="7ZZJ">
    <property type="method" value="X-ray"/>
    <property type="resolution" value="1.99 A"/>
    <property type="chains" value="A=1-264"/>
</dbReference>
<dbReference type="PDB" id="8A9V">
    <property type="method" value="X-ray"/>
    <property type="resolution" value="1.98 A"/>
    <property type="chains" value="A=1-264"/>
</dbReference>
<dbReference type="PDB" id="8B47">
    <property type="method" value="X-ray"/>
    <property type="resolution" value="2.53 A"/>
    <property type="chains" value="A/B=1-264"/>
</dbReference>
<dbReference type="PDBsum" id="2I1W"/>
<dbReference type="PDBsum" id="2I29"/>
<dbReference type="PDBsum" id="2I2A"/>
<dbReference type="PDBsum" id="2I2B"/>
<dbReference type="PDBsum" id="2I2C"/>
<dbReference type="PDBsum" id="2I2D"/>
<dbReference type="PDBsum" id="2I2F"/>
<dbReference type="PDBsum" id="2Q5F"/>
<dbReference type="PDBsum" id="3V7U"/>
<dbReference type="PDBsum" id="3V7W"/>
<dbReference type="PDBsum" id="3V7Y"/>
<dbReference type="PDBsum" id="3V80"/>
<dbReference type="PDBsum" id="3V8M"/>
<dbReference type="PDBsum" id="3V8N"/>
<dbReference type="PDBsum" id="3V8P"/>
<dbReference type="PDBsum" id="3V8Q"/>
<dbReference type="PDBsum" id="3V8R"/>
<dbReference type="PDBsum" id="4DY6"/>
<dbReference type="PDBsum" id="5DHP"/>
<dbReference type="PDBsum" id="5DHQ"/>
<dbReference type="PDBsum" id="5DHR"/>
<dbReference type="PDBsum" id="5DHS"/>
<dbReference type="PDBsum" id="5DHT"/>
<dbReference type="PDBsum" id="5DHU"/>
<dbReference type="PDBsum" id="5EJF"/>
<dbReference type="PDBsum" id="5EJG"/>
<dbReference type="PDBsum" id="5EJH"/>
<dbReference type="PDBsum" id="5EJI"/>
<dbReference type="PDBsum" id="6RBO"/>
<dbReference type="PDBsum" id="6RBP"/>
<dbReference type="PDBsum" id="6RBQ"/>
<dbReference type="PDBsum" id="6RBR"/>
<dbReference type="PDBsum" id="6RBS"/>
<dbReference type="PDBsum" id="6RBT"/>
<dbReference type="PDBsum" id="6RBU"/>
<dbReference type="PDBsum" id="6RBV"/>
<dbReference type="PDBsum" id="6RBW"/>
<dbReference type="PDBsum" id="6RBX"/>
<dbReference type="PDBsum" id="6RBY"/>
<dbReference type="PDBsum" id="6RBZ"/>
<dbReference type="PDBsum" id="6RC0"/>
<dbReference type="PDBsum" id="6RC1"/>
<dbReference type="PDBsum" id="6RC2"/>
<dbReference type="PDBsum" id="6RC3"/>
<dbReference type="PDBsum" id="6RC4"/>
<dbReference type="PDBsum" id="6RC5"/>
<dbReference type="PDBsum" id="6RC6"/>
<dbReference type="PDBsum" id="6RG6"/>
<dbReference type="PDBsum" id="6RG7"/>
<dbReference type="PDBsum" id="6RG8"/>
<dbReference type="PDBsum" id="6RG9"/>
<dbReference type="PDBsum" id="6RGA"/>
<dbReference type="PDBsum" id="6RGB"/>
<dbReference type="PDBsum" id="6RGC"/>
<dbReference type="PDBsum" id="6RGD"/>
<dbReference type="PDBsum" id="6RGE"/>
<dbReference type="PDBsum" id="6RGF"/>
<dbReference type="PDBsum" id="6RR2"/>
<dbReference type="PDBsum" id="6Z61"/>
<dbReference type="PDBsum" id="6Z64"/>
<dbReference type="PDBsum" id="6Z65"/>
<dbReference type="PDBsum" id="7ZZ7"/>
<dbReference type="PDBsum" id="7ZZ9"/>
<dbReference type="PDBsum" id="7ZZA"/>
<dbReference type="PDBsum" id="7ZZB"/>
<dbReference type="PDBsum" id="7ZZC"/>
<dbReference type="PDBsum" id="7ZZD"/>
<dbReference type="PDBsum" id="7ZZE"/>
<dbReference type="PDBsum" id="7ZZF"/>
<dbReference type="PDBsum" id="7ZZG"/>
<dbReference type="PDBsum" id="7ZZH"/>
<dbReference type="PDBsum" id="7ZZJ"/>
<dbReference type="PDBsum" id="8A9V"/>
<dbReference type="PDBsum" id="8B47"/>
<dbReference type="SMR" id="Q8Y8D7"/>
<dbReference type="STRING" id="169963.gene:17593624"/>
<dbReference type="BindingDB" id="Q8Y8D7"/>
<dbReference type="ChEMBL" id="CHEMBL4523411"/>
<dbReference type="PaxDb" id="169963-lmo0968"/>
<dbReference type="EnsemblBacteria" id="CAC99046">
    <property type="protein sequence ID" value="CAC99046"/>
    <property type="gene ID" value="CAC99046"/>
</dbReference>
<dbReference type="KEGG" id="lmo:lmo0968"/>
<dbReference type="PATRIC" id="fig|169963.11.peg.995"/>
<dbReference type="eggNOG" id="COG0061">
    <property type="taxonomic scope" value="Bacteria"/>
</dbReference>
<dbReference type="HOGENOM" id="CLU_008831_0_3_9"/>
<dbReference type="OrthoDB" id="9774737at2"/>
<dbReference type="PhylomeDB" id="Q8Y8D7"/>
<dbReference type="BioCyc" id="LMON169963:LMO0968-MONOMER"/>
<dbReference type="BRENDA" id="2.7.1.23">
    <property type="organism ID" value="3045"/>
</dbReference>
<dbReference type="EvolutionaryTrace" id="Q8Y8D7"/>
<dbReference type="Proteomes" id="UP000000817">
    <property type="component" value="Chromosome"/>
</dbReference>
<dbReference type="GO" id="GO:0005737">
    <property type="term" value="C:cytoplasm"/>
    <property type="evidence" value="ECO:0007669"/>
    <property type="project" value="UniProtKB-SubCell"/>
</dbReference>
<dbReference type="GO" id="GO:0005524">
    <property type="term" value="F:ATP binding"/>
    <property type="evidence" value="ECO:0000314"/>
    <property type="project" value="UniProtKB"/>
</dbReference>
<dbReference type="GO" id="GO:0046872">
    <property type="term" value="F:metal ion binding"/>
    <property type="evidence" value="ECO:0007669"/>
    <property type="project" value="UniProtKB-UniRule"/>
</dbReference>
<dbReference type="GO" id="GO:0051287">
    <property type="term" value="F:NAD binding"/>
    <property type="evidence" value="ECO:0000314"/>
    <property type="project" value="UniProtKB"/>
</dbReference>
<dbReference type="GO" id="GO:0003951">
    <property type="term" value="F:NAD+ kinase activity"/>
    <property type="evidence" value="ECO:0000314"/>
    <property type="project" value="UniProtKB"/>
</dbReference>
<dbReference type="GO" id="GO:0019674">
    <property type="term" value="P:NAD metabolic process"/>
    <property type="evidence" value="ECO:0007669"/>
    <property type="project" value="InterPro"/>
</dbReference>
<dbReference type="GO" id="GO:0006741">
    <property type="term" value="P:NADP biosynthetic process"/>
    <property type="evidence" value="ECO:0000314"/>
    <property type="project" value="UniProtKB"/>
</dbReference>
<dbReference type="FunFam" id="2.60.200.30:FF:000002">
    <property type="entry name" value="NAD kinase"/>
    <property type="match status" value="1"/>
</dbReference>
<dbReference type="Gene3D" id="3.40.50.10330">
    <property type="entry name" value="Probable inorganic polyphosphate/atp-NAD kinase, domain 1"/>
    <property type="match status" value="1"/>
</dbReference>
<dbReference type="Gene3D" id="2.60.200.30">
    <property type="entry name" value="Probable inorganic polyphosphate/atp-NAD kinase, domain 2"/>
    <property type="match status" value="1"/>
</dbReference>
<dbReference type="HAMAP" id="MF_00361">
    <property type="entry name" value="NAD_kinase"/>
    <property type="match status" value="1"/>
</dbReference>
<dbReference type="InterPro" id="IPR017438">
    <property type="entry name" value="ATP-NAD_kinase_N"/>
</dbReference>
<dbReference type="InterPro" id="IPR017437">
    <property type="entry name" value="ATP-NAD_kinase_PpnK-typ_C"/>
</dbReference>
<dbReference type="InterPro" id="IPR016064">
    <property type="entry name" value="NAD/diacylglycerol_kinase_sf"/>
</dbReference>
<dbReference type="InterPro" id="IPR002504">
    <property type="entry name" value="NADK"/>
</dbReference>
<dbReference type="NCBIfam" id="NF003424">
    <property type="entry name" value="PRK04885.1"/>
    <property type="match status" value="1"/>
</dbReference>
<dbReference type="PANTHER" id="PTHR20275">
    <property type="entry name" value="NAD KINASE"/>
    <property type="match status" value="1"/>
</dbReference>
<dbReference type="PANTHER" id="PTHR20275:SF0">
    <property type="entry name" value="NAD KINASE"/>
    <property type="match status" value="1"/>
</dbReference>
<dbReference type="Pfam" id="PF01513">
    <property type="entry name" value="NAD_kinase"/>
    <property type="match status" value="1"/>
</dbReference>
<dbReference type="Pfam" id="PF20143">
    <property type="entry name" value="NAD_kinase_C"/>
    <property type="match status" value="1"/>
</dbReference>
<dbReference type="SUPFAM" id="SSF111331">
    <property type="entry name" value="NAD kinase/diacylglycerol kinase-like"/>
    <property type="match status" value="1"/>
</dbReference>